<reference key="1">
    <citation type="submission" date="1996-10" db="EMBL/GenBank/DDBJ databases">
        <authorList>
            <person name="Nersissian A.M."/>
            <person name="Valentine J.S."/>
        </authorList>
    </citation>
    <scope>NUCLEOTIDE SEQUENCE [MRNA]</scope>
</reference>
<reference key="2">
    <citation type="journal article" date="2000" name="Nature">
        <title>Sequence and analysis of chromosome 1 of the plant Arabidopsis thaliana.</title>
        <authorList>
            <person name="Theologis A."/>
            <person name="Ecker J.R."/>
            <person name="Palm C.J."/>
            <person name="Federspiel N.A."/>
            <person name="Kaul S."/>
            <person name="White O."/>
            <person name="Alonso J."/>
            <person name="Altafi H."/>
            <person name="Araujo R."/>
            <person name="Bowman C.L."/>
            <person name="Brooks S.Y."/>
            <person name="Buehler E."/>
            <person name="Chan A."/>
            <person name="Chao Q."/>
            <person name="Chen H."/>
            <person name="Cheuk R.F."/>
            <person name="Chin C.W."/>
            <person name="Chung M.K."/>
            <person name="Conn L."/>
            <person name="Conway A.B."/>
            <person name="Conway A.R."/>
            <person name="Creasy T.H."/>
            <person name="Dewar K."/>
            <person name="Dunn P."/>
            <person name="Etgu P."/>
            <person name="Feldblyum T.V."/>
            <person name="Feng J.-D."/>
            <person name="Fong B."/>
            <person name="Fujii C.Y."/>
            <person name="Gill J.E."/>
            <person name="Goldsmith A.D."/>
            <person name="Haas B."/>
            <person name="Hansen N.F."/>
            <person name="Hughes B."/>
            <person name="Huizar L."/>
            <person name="Hunter J.L."/>
            <person name="Jenkins J."/>
            <person name="Johnson-Hopson C."/>
            <person name="Khan S."/>
            <person name="Khaykin E."/>
            <person name="Kim C.J."/>
            <person name="Koo H.L."/>
            <person name="Kremenetskaia I."/>
            <person name="Kurtz D.B."/>
            <person name="Kwan A."/>
            <person name="Lam B."/>
            <person name="Langin-Hooper S."/>
            <person name="Lee A."/>
            <person name="Lee J.M."/>
            <person name="Lenz C.A."/>
            <person name="Li J.H."/>
            <person name="Li Y.-P."/>
            <person name="Lin X."/>
            <person name="Liu S.X."/>
            <person name="Liu Z.A."/>
            <person name="Luros J.S."/>
            <person name="Maiti R."/>
            <person name="Marziali A."/>
            <person name="Militscher J."/>
            <person name="Miranda M."/>
            <person name="Nguyen M."/>
            <person name="Nierman W.C."/>
            <person name="Osborne B.I."/>
            <person name="Pai G."/>
            <person name="Peterson J."/>
            <person name="Pham P.K."/>
            <person name="Rizzo M."/>
            <person name="Rooney T."/>
            <person name="Rowley D."/>
            <person name="Sakano H."/>
            <person name="Salzberg S.L."/>
            <person name="Schwartz J.R."/>
            <person name="Shinn P."/>
            <person name="Southwick A.M."/>
            <person name="Sun H."/>
            <person name="Tallon L.J."/>
            <person name="Tambunga G."/>
            <person name="Toriumi M.J."/>
            <person name="Town C.D."/>
            <person name="Utterback T."/>
            <person name="Van Aken S."/>
            <person name="Vaysberg M."/>
            <person name="Vysotskaia V.S."/>
            <person name="Walker M."/>
            <person name="Wu D."/>
            <person name="Yu G."/>
            <person name="Fraser C.M."/>
            <person name="Venter J.C."/>
            <person name="Davis R.W."/>
        </authorList>
    </citation>
    <scope>NUCLEOTIDE SEQUENCE [LARGE SCALE GENOMIC DNA]</scope>
    <source>
        <strain>cv. Columbia</strain>
    </source>
</reference>
<reference key="3">
    <citation type="journal article" date="2017" name="Plant J.">
        <title>Araport11: a complete reannotation of the Arabidopsis thaliana reference genome.</title>
        <authorList>
            <person name="Cheng C.Y."/>
            <person name="Krishnakumar V."/>
            <person name="Chan A.P."/>
            <person name="Thibaud-Nissen F."/>
            <person name="Schobel S."/>
            <person name="Town C.D."/>
        </authorList>
    </citation>
    <scope>GENOME REANNOTATION</scope>
    <source>
        <strain>cv. Columbia</strain>
    </source>
</reference>
<reference key="4">
    <citation type="journal article" date="2003" name="Science">
        <title>Empirical analysis of transcriptional activity in the Arabidopsis genome.</title>
        <authorList>
            <person name="Yamada K."/>
            <person name="Lim J."/>
            <person name="Dale J.M."/>
            <person name="Chen H."/>
            <person name="Shinn P."/>
            <person name="Palm C.J."/>
            <person name="Southwick A.M."/>
            <person name="Wu H.C."/>
            <person name="Kim C.J."/>
            <person name="Nguyen M."/>
            <person name="Pham P.K."/>
            <person name="Cheuk R.F."/>
            <person name="Karlin-Newmann G."/>
            <person name="Liu S.X."/>
            <person name="Lam B."/>
            <person name="Sakano H."/>
            <person name="Wu T."/>
            <person name="Yu G."/>
            <person name="Miranda M."/>
            <person name="Quach H.L."/>
            <person name="Tripp M."/>
            <person name="Chang C.H."/>
            <person name="Lee J.M."/>
            <person name="Toriumi M.J."/>
            <person name="Chan M.M."/>
            <person name="Tang C.C."/>
            <person name="Onodera C.S."/>
            <person name="Deng J.M."/>
            <person name="Akiyama K."/>
            <person name="Ansari Y."/>
            <person name="Arakawa T."/>
            <person name="Banh J."/>
            <person name="Banno F."/>
            <person name="Bowser L."/>
            <person name="Brooks S.Y."/>
            <person name="Carninci P."/>
            <person name="Chao Q."/>
            <person name="Choy N."/>
            <person name="Enju A."/>
            <person name="Goldsmith A.D."/>
            <person name="Gurjal M."/>
            <person name="Hansen N.F."/>
            <person name="Hayashizaki Y."/>
            <person name="Johnson-Hopson C."/>
            <person name="Hsuan V.W."/>
            <person name="Iida K."/>
            <person name="Karnes M."/>
            <person name="Khan S."/>
            <person name="Koesema E."/>
            <person name="Ishida J."/>
            <person name="Jiang P.X."/>
            <person name="Jones T."/>
            <person name="Kawai J."/>
            <person name="Kamiya A."/>
            <person name="Meyers C."/>
            <person name="Nakajima M."/>
            <person name="Narusaka M."/>
            <person name="Seki M."/>
            <person name="Sakurai T."/>
            <person name="Satou M."/>
            <person name="Tamse R."/>
            <person name="Vaysberg M."/>
            <person name="Wallender E.K."/>
            <person name="Wong C."/>
            <person name="Yamamura Y."/>
            <person name="Yuan S."/>
            <person name="Shinozaki K."/>
            <person name="Davis R.W."/>
            <person name="Theologis A."/>
            <person name="Ecker J.R."/>
        </authorList>
    </citation>
    <scope>NUCLEOTIDE SEQUENCE [LARGE SCALE MRNA]</scope>
    <source>
        <strain>cv. Columbia</strain>
    </source>
</reference>
<reference key="5">
    <citation type="submission" date="2002-03" db="EMBL/GenBank/DDBJ databases">
        <title>Full-length cDNA from Arabidopsis thaliana.</title>
        <authorList>
            <person name="Brover V.V."/>
            <person name="Troukhan M.E."/>
            <person name="Alexandrov N.A."/>
            <person name="Lu Y.-P."/>
            <person name="Flavell R.B."/>
            <person name="Feldmann K.A."/>
        </authorList>
    </citation>
    <scope>NUCLEOTIDE SEQUENCE [LARGE SCALE MRNA]</scope>
</reference>
<reference key="6">
    <citation type="journal article" date="2003" name="Plant Physiol.">
        <title>Identification of glycosylphosphatidylinositol-anchored proteins in Arabidopsis. A proteomic and genomic analysis.</title>
        <authorList>
            <person name="Borner G.H.H."/>
            <person name="Lilley K.S."/>
            <person name="Stevens T.J."/>
            <person name="Dupree P."/>
        </authorList>
    </citation>
    <scope>GENE FAMILY</scope>
    <source>
        <strain>cv. Columbia</strain>
    </source>
</reference>
<reference key="7">
    <citation type="journal article" date="2009" name="Biosci. Biotechnol. Biochem.">
        <title>Genome-wide identification, structure and expression studies, and mutant collection of 22 early nodulin-like protein genes in Arabidopsis.</title>
        <authorList>
            <person name="Mashiguchi K."/>
            <person name="Asami T."/>
            <person name="Suzuki Y."/>
        </authorList>
    </citation>
    <scope>TISSUE SPECIFICITY</scope>
    <scope>GENE FAMILY</scope>
    <scope>NOMENCLATURE</scope>
    <source>
        <strain>cv. Columbia</strain>
    </source>
</reference>
<reference key="8">
    <citation type="journal article" date="2014" name="Plant Cell Physiol.">
        <title>Emerging functions of nodulin-like proteins in non-nodulating plant species.</title>
        <authorList>
            <person name="Denance N."/>
            <person name="Szurek B."/>
            <person name="Noel L.D."/>
        </authorList>
    </citation>
    <scope>REVIEW ON NODULIN-LIKE PROTEINS</scope>
</reference>
<protein>
    <recommendedName>
        <fullName evidence="6">Early nodulin-like protein 18</fullName>
        <shortName evidence="6">AtENODL18</shortName>
    </recommendedName>
    <alternativeName>
        <fullName evidence="8">Phytocyanin-like protein ENODL18</fullName>
    </alternativeName>
</protein>
<feature type="signal peptide" evidence="1">
    <location>
        <begin position="1"/>
        <end position="26"/>
    </location>
</feature>
<feature type="chain" id="PRO_5014306603" description="Early nodulin-like protein 18">
    <location>
        <begin position="27"/>
        <end position="204"/>
    </location>
</feature>
<feature type="propeptide" id="PRO_0000457747" description="Removed in mature form" evidence="1">
    <location>
        <begin position="205"/>
        <end position="228"/>
    </location>
</feature>
<feature type="domain" description="Phytocyanin" evidence="3">
    <location>
        <begin position="28"/>
        <end position="148"/>
    </location>
</feature>
<feature type="region of interest" description="Disordered" evidence="4">
    <location>
        <begin position="148"/>
        <end position="211"/>
    </location>
</feature>
<feature type="compositionally biased region" description="Low complexity" evidence="4">
    <location>
        <begin position="153"/>
        <end position="170"/>
    </location>
</feature>
<feature type="compositionally biased region" description="Basic and acidic residues" evidence="4">
    <location>
        <begin position="188"/>
        <end position="204"/>
    </location>
</feature>
<feature type="lipid moiety-binding region" description="GPI-anchor amidated serine" evidence="1">
    <location>
        <position position="204"/>
    </location>
</feature>
<feature type="glycosylation site" description="N-linked (GlcNAc...) asparagine" evidence="2">
    <location>
        <position position="29"/>
    </location>
</feature>
<feature type="glycosylation site" description="N-linked (GlcNAc...) asparagine" evidence="2">
    <location>
        <position position="71"/>
    </location>
</feature>
<feature type="glycosylation site" description="N-linked (GlcNAc...) asparagine" evidence="2">
    <location>
        <position position="94"/>
    </location>
</feature>
<feature type="glycosylation site" description="N-linked (GlcNAc...) asparagine" evidence="2">
    <location>
        <position position="145"/>
    </location>
</feature>
<feature type="disulfide bond" evidence="3">
    <location>
        <begin position="86"/>
        <end position="136"/>
    </location>
</feature>
<feature type="sequence conflict" description="In Ref. 5; AAM61545." evidence="8" ref="5">
    <original>C</original>
    <variation>Y</variation>
    <location>
        <position position="16"/>
    </location>
</feature>
<accession>O82083</accession>
<accession>Q8LF88</accession>
<keyword id="KW-1003">Cell membrane</keyword>
<keyword id="KW-1015">Disulfide bond</keyword>
<keyword id="KW-0325">Glycoprotein</keyword>
<keyword id="KW-0336">GPI-anchor</keyword>
<keyword id="KW-0449">Lipoprotein</keyword>
<keyword id="KW-0472">Membrane</keyword>
<keyword id="KW-1185">Reference proteome</keyword>
<keyword id="KW-0732">Signal</keyword>
<sequence length="228" mass="24904">MSPSCSSCVNVLLIMCLMLLSLSADAYKNYTVGESTGWFDIQERPSANYQKWADSKSFSLGDFLIFNTDSNHSVVQTYDFKTYKDCDYDNNENNDTTEWSAANPSATSPVPVSISVPLVKEGSNYFFSGNYDGEQCKFGQHFMINVTHGQGLPDSSSPDDAAAPGPSESSQSGDDEVAPDTIVPANFDHPKDIESADDDKEVHSKKSSSSTTKTSLFCFVFMGLFASF</sequence>
<name>ENL18_ARATH</name>
<gene>
    <name evidence="6" type="primary">ENODL18</name>
    <name evidence="6" type="synonym">EN18</name>
    <name evidence="9" type="ordered locus">At1g08500</name>
    <name evidence="10" type="ORF">T27G7.18</name>
</gene>
<comment type="function">
    <text evidence="7">May act as a carbohydrate transporter.</text>
</comment>
<comment type="subcellular location">
    <subcellularLocation>
        <location evidence="1">Cell membrane</location>
        <topology evidence="1">Lipid-anchor</topology>
        <topology evidence="1">GPI-anchor</topology>
    </subcellularLocation>
</comment>
<comment type="tissue specificity">
    <text evidence="5">Mostly expressed in seedlings, roots and flowers, and, to a lower extent, in leaves, stems and seeds.</text>
</comment>
<comment type="similarity">
    <text evidence="8">Belongs to the early nodulin-like (ENODL) family.</text>
</comment>
<dbReference type="EMBL" id="U76300">
    <property type="protein sequence ID" value="AAC32929.1"/>
    <property type="molecule type" value="mRNA"/>
</dbReference>
<dbReference type="EMBL" id="AC006932">
    <property type="protein sequence ID" value="AAF22894.1"/>
    <property type="molecule type" value="Genomic_DNA"/>
</dbReference>
<dbReference type="EMBL" id="CP002684">
    <property type="protein sequence ID" value="AEE28299.1"/>
    <property type="molecule type" value="Genomic_DNA"/>
</dbReference>
<dbReference type="EMBL" id="AF370470">
    <property type="protein sequence ID" value="AAK43847.1"/>
    <property type="molecule type" value="mRNA"/>
</dbReference>
<dbReference type="EMBL" id="AY064634">
    <property type="protein sequence ID" value="AAL47347.1"/>
    <property type="molecule type" value="mRNA"/>
</dbReference>
<dbReference type="EMBL" id="AY084986">
    <property type="protein sequence ID" value="AAM61545.1"/>
    <property type="molecule type" value="mRNA"/>
</dbReference>
<dbReference type="PIR" id="A86218">
    <property type="entry name" value="A86218"/>
</dbReference>
<dbReference type="RefSeq" id="NP_563820.1">
    <property type="nucleotide sequence ID" value="NM_100723.4"/>
</dbReference>
<dbReference type="SMR" id="O82083"/>
<dbReference type="FunCoup" id="O82083">
    <property type="interactions" value="118"/>
</dbReference>
<dbReference type="STRING" id="3702.O82083"/>
<dbReference type="GlyGen" id="O82083">
    <property type="glycosylation" value="4 sites"/>
</dbReference>
<dbReference type="PaxDb" id="3702-AT1G08500.1"/>
<dbReference type="ProteomicsDB" id="189135"/>
<dbReference type="EnsemblPlants" id="AT1G08500.1">
    <property type="protein sequence ID" value="AT1G08500.1"/>
    <property type="gene ID" value="AT1G08500"/>
</dbReference>
<dbReference type="GeneID" id="837371"/>
<dbReference type="Gramene" id="AT1G08500.1">
    <property type="protein sequence ID" value="AT1G08500.1"/>
    <property type="gene ID" value="AT1G08500"/>
</dbReference>
<dbReference type="KEGG" id="ath:AT1G08500"/>
<dbReference type="Araport" id="AT1G08500"/>
<dbReference type="TAIR" id="AT1G08500">
    <property type="gene designation" value="ENODL18"/>
</dbReference>
<dbReference type="eggNOG" id="ENOG502RY0R">
    <property type="taxonomic scope" value="Eukaryota"/>
</dbReference>
<dbReference type="HOGENOM" id="CLU_098901_1_0_1"/>
<dbReference type="InParanoid" id="O82083"/>
<dbReference type="OMA" id="TGWFDIQ"/>
<dbReference type="OrthoDB" id="783836at2759"/>
<dbReference type="PRO" id="PR:O82083"/>
<dbReference type="Proteomes" id="UP000006548">
    <property type="component" value="Chromosome 1"/>
</dbReference>
<dbReference type="ExpressionAtlas" id="O82083">
    <property type="expression patterns" value="baseline and differential"/>
</dbReference>
<dbReference type="GO" id="GO:0005886">
    <property type="term" value="C:plasma membrane"/>
    <property type="evidence" value="ECO:0007669"/>
    <property type="project" value="UniProtKB-SubCell"/>
</dbReference>
<dbReference type="GO" id="GO:0098552">
    <property type="term" value="C:side of membrane"/>
    <property type="evidence" value="ECO:0007669"/>
    <property type="project" value="UniProtKB-KW"/>
</dbReference>
<dbReference type="GO" id="GO:0009055">
    <property type="term" value="F:electron transfer activity"/>
    <property type="evidence" value="ECO:0007669"/>
    <property type="project" value="InterPro"/>
</dbReference>
<dbReference type="CDD" id="cd04216">
    <property type="entry name" value="Phytocyanin"/>
    <property type="match status" value="1"/>
</dbReference>
<dbReference type="FunFam" id="2.60.40.420:FF:000048">
    <property type="entry name" value="Early nodulin-like protein 18"/>
    <property type="match status" value="1"/>
</dbReference>
<dbReference type="Gene3D" id="2.60.40.420">
    <property type="entry name" value="Cupredoxins - blue copper proteins"/>
    <property type="match status" value="1"/>
</dbReference>
<dbReference type="InterPro" id="IPR008972">
    <property type="entry name" value="Cupredoxin"/>
</dbReference>
<dbReference type="InterPro" id="IPR039391">
    <property type="entry name" value="Phytocyanin-like"/>
</dbReference>
<dbReference type="InterPro" id="IPR003245">
    <property type="entry name" value="Phytocyanin_dom"/>
</dbReference>
<dbReference type="PANTHER" id="PTHR33021">
    <property type="entry name" value="BLUE COPPER PROTEIN"/>
    <property type="match status" value="1"/>
</dbReference>
<dbReference type="PANTHER" id="PTHR33021:SF6">
    <property type="entry name" value="EARLY NODULIN-LIKE PROTEIN 18"/>
    <property type="match status" value="1"/>
</dbReference>
<dbReference type="Pfam" id="PF02298">
    <property type="entry name" value="Cu_bind_like"/>
    <property type="match status" value="1"/>
</dbReference>
<dbReference type="SUPFAM" id="SSF49503">
    <property type="entry name" value="Cupredoxins"/>
    <property type="match status" value="1"/>
</dbReference>
<dbReference type="PROSITE" id="PS51485">
    <property type="entry name" value="PHYTOCYANIN"/>
    <property type="match status" value="1"/>
</dbReference>
<organism>
    <name type="scientific">Arabidopsis thaliana</name>
    <name type="common">Mouse-ear cress</name>
    <dbReference type="NCBI Taxonomy" id="3702"/>
    <lineage>
        <taxon>Eukaryota</taxon>
        <taxon>Viridiplantae</taxon>
        <taxon>Streptophyta</taxon>
        <taxon>Embryophyta</taxon>
        <taxon>Tracheophyta</taxon>
        <taxon>Spermatophyta</taxon>
        <taxon>Magnoliopsida</taxon>
        <taxon>eudicotyledons</taxon>
        <taxon>Gunneridae</taxon>
        <taxon>Pentapetalae</taxon>
        <taxon>rosids</taxon>
        <taxon>malvids</taxon>
        <taxon>Brassicales</taxon>
        <taxon>Brassicaceae</taxon>
        <taxon>Camelineae</taxon>
        <taxon>Arabidopsis</taxon>
    </lineage>
</organism>
<proteinExistence type="evidence at transcript level"/>
<evidence type="ECO:0000255" key="1"/>
<evidence type="ECO:0000255" key="2">
    <source>
        <dbReference type="PROSITE-ProRule" id="PRU00498"/>
    </source>
</evidence>
<evidence type="ECO:0000255" key="3">
    <source>
        <dbReference type="PROSITE-ProRule" id="PRU00818"/>
    </source>
</evidence>
<evidence type="ECO:0000256" key="4">
    <source>
        <dbReference type="SAM" id="MobiDB-lite"/>
    </source>
</evidence>
<evidence type="ECO:0000269" key="5">
    <source>
    </source>
</evidence>
<evidence type="ECO:0000303" key="6">
    <source>
    </source>
</evidence>
<evidence type="ECO:0000303" key="7">
    <source>
    </source>
</evidence>
<evidence type="ECO:0000305" key="8"/>
<evidence type="ECO:0000312" key="9">
    <source>
        <dbReference type="Araport" id="AT1G08500"/>
    </source>
</evidence>
<evidence type="ECO:0000312" key="10">
    <source>
        <dbReference type="EMBL" id="AAF22894.1"/>
    </source>
</evidence>